<keyword id="KW-0106">Calcium</keyword>
<keyword id="KW-0119">Carbohydrate metabolism</keyword>
<keyword id="KW-0326">Glycosidase</keyword>
<keyword id="KW-0378">Hydrolase</keyword>
<keyword id="KW-0479">Metal-binding</keyword>
<organism>
    <name type="scientific">Bacillus acidopullulyticus</name>
    <dbReference type="NCBI Taxonomy" id="28030"/>
    <lineage>
        <taxon>Bacteria</taxon>
        <taxon>Bacillati</taxon>
        <taxon>Bacillota</taxon>
        <taxon>Bacilli</taxon>
        <taxon>Bacillales</taxon>
        <taxon>Bacillaceae</taxon>
        <taxon>Bacillus</taxon>
    </lineage>
</organism>
<dbReference type="EC" id="3.2.1.133"/>
<dbReference type="EMBL" id="Z22520">
    <property type="protein sequence ID" value="CAA80246.1"/>
    <property type="molecule type" value="Genomic_DNA"/>
</dbReference>
<dbReference type="PIR" id="S34731">
    <property type="entry name" value="S34731"/>
</dbReference>
<dbReference type="SMR" id="P32818"/>
<dbReference type="CAZy" id="CBM34">
    <property type="family name" value="Carbohydrate-Binding Module Family 34"/>
</dbReference>
<dbReference type="CAZy" id="GH13">
    <property type="family name" value="Glycoside Hydrolase Family 13"/>
</dbReference>
<dbReference type="GO" id="GO:0043897">
    <property type="term" value="F:glucan 1,4-alpha-maltohydrolase activity"/>
    <property type="evidence" value="ECO:0007669"/>
    <property type="project" value="UniProtKB-EC"/>
</dbReference>
<dbReference type="GO" id="GO:0046872">
    <property type="term" value="F:metal ion binding"/>
    <property type="evidence" value="ECO:0007669"/>
    <property type="project" value="UniProtKB-KW"/>
</dbReference>
<dbReference type="GO" id="GO:0005975">
    <property type="term" value="P:carbohydrate metabolic process"/>
    <property type="evidence" value="ECO:0007669"/>
    <property type="project" value="InterPro"/>
</dbReference>
<dbReference type="CDD" id="cd11338">
    <property type="entry name" value="AmyAc_CMD"/>
    <property type="match status" value="1"/>
</dbReference>
<dbReference type="CDD" id="cd02857">
    <property type="entry name" value="E_set_CDase_PDE_N"/>
    <property type="match status" value="1"/>
</dbReference>
<dbReference type="Gene3D" id="3.20.20.80">
    <property type="entry name" value="Glycosidases"/>
    <property type="match status" value="1"/>
</dbReference>
<dbReference type="Gene3D" id="2.60.40.1180">
    <property type="entry name" value="Golgi alpha-mannosidase II"/>
    <property type="match status" value="1"/>
</dbReference>
<dbReference type="Gene3D" id="2.60.40.10">
    <property type="entry name" value="Immunoglobulins"/>
    <property type="match status" value="1"/>
</dbReference>
<dbReference type="Gene3D" id="3.90.400.10">
    <property type="entry name" value="Oligo-1,6-glucosidase, Domain 2"/>
    <property type="match status" value="1"/>
</dbReference>
<dbReference type="InterPro" id="IPR006047">
    <property type="entry name" value="Glyco_hydro_13_cat_dom"/>
</dbReference>
<dbReference type="InterPro" id="IPR004185">
    <property type="entry name" value="Glyco_hydro_13_lg-like_dom"/>
</dbReference>
<dbReference type="InterPro" id="IPR013780">
    <property type="entry name" value="Glyco_hydro_b"/>
</dbReference>
<dbReference type="InterPro" id="IPR017853">
    <property type="entry name" value="Glycoside_hydrolase_SF"/>
</dbReference>
<dbReference type="InterPro" id="IPR013783">
    <property type="entry name" value="Ig-like_fold"/>
</dbReference>
<dbReference type="InterPro" id="IPR032091">
    <property type="entry name" value="Malt_amylase-like_C"/>
</dbReference>
<dbReference type="InterPro" id="IPR045857">
    <property type="entry name" value="O16G_dom_2"/>
</dbReference>
<dbReference type="PANTHER" id="PTHR10357">
    <property type="entry name" value="ALPHA-AMYLASE FAMILY MEMBER"/>
    <property type="match status" value="1"/>
</dbReference>
<dbReference type="PANTHER" id="PTHR10357:SF210">
    <property type="entry name" value="MALTODEXTRIN GLUCOSIDASE"/>
    <property type="match status" value="1"/>
</dbReference>
<dbReference type="Pfam" id="PF00128">
    <property type="entry name" value="Alpha-amylase"/>
    <property type="match status" value="1"/>
</dbReference>
<dbReference type="Pfam" id="PF02903">
    <property type="entry name" value="Alpha-amylase_N"/>
    <property type="match status" value="1"/>
</dbReference>
<dbReference type="Pfam" id="PF16657">
    <property type="entry name" value="Malt_amylase_C"/>
    <property type="match status" value="1"/>
</dbReference>
<dbReference type="SMART" id="SM00642">
    <property type="entry name" value="Aamy"/>
    <property type="match status" value="1"/>
</dbReference>
<dbReference type="SUPFAM" id="SSF51445">
    <property type="entry name" value="(Trans)glycosidases"/>
    <property type="match status" value="1"/>
</dbReference>
<dbReference type="SUPFAM" id="SSF51011">
    <property type="entry name" value="Glycosyl hydrolase domain"/>
    <property type="match status" value="1"/>
</dbReference>
<name>AMYM_BACAD</name>
<comment type="function">
    <text>Converts starch into maltose.</text>
</comment>
<comment type="catalytic activity">
    <reaction>
        <text>hydrolysis of (1-&gt;4)-alpha-D-glucosidic linkages in polysaccharides so as to remove successive alpha-maltose residues from the non-reducing ends of the chains.</text>
        <dbReference type="EC" id="3.2.1.133"/>
    </reaction>
</comment>
<comment type="cofactor">
    <cofactor evidence="2">
        <name>Ca(2+)</name>
        <dbReference type="ChEBI" id="CHEBI:29108"/>
    </cofactor>
    <text evidence="2">Binds 1 Ca(2+) ion per subunit.</text>
</comment>
<comment type="similarity">
    <text evidence="4">Belongs to the glycosyl hydrolase 13 family.</text>
</comment>
<accession>P32818</accession>
<protein>
    <recommendedName>
        <fullName>Maltogenic alpha-amylase</fullName>
        <ecNumber>3.2.1.133</ecNumber>
    </recommendedName>
    <alternativeName>
        <fullName>Glucan 1,4-alpha-maltohydrolase</fullName>
    </alternativeName>
</protein>
<proteinExistence type="inferred from homology"/>
<evidence type="ECO:0000250" key="1"/>
<evidence type="ECO:0000250" key="2">
    <source>
        <dbReference type="UniProtKB" id="P38940"/>
    </source>
</evidence>
<evidence type="ECO:0000250" key="3">
    <source>
        <dbReference type="UniProtKB" id="Q60053"/>
    </source>
</evidence>
<evidence type="ECO:0000305" key="4"/>
<reference key="1">
    <citation type="submission" date="1993-04" db="EMBL/GenBank/DDBJ databases">
        <title>Molecular genetics analysis of a maltogenic amylase gene of Bacillus acidopullulyticus.</title>
        <authorList>
            <person name="Kelly A.P."/>
            <person name="Diderichsen B."/>
            <person name="Jorgensen S.T."/>
            <person name="McConnell D.J."/>
        </authorList>
    </citation>
    <scope>NUCLEOTIDE SEQUENCE [GENOMIC DNA]</scope>
</reference>
<feature type="chain" id="PRO_0000054295" description="Maltogenic alpha-amylase">
    <location>
        <begin position="1"/>
        <end position="586"/>
    </location>
</feature>
<feature type="active site" description="Nucleophile" evidence="2">
    <location>
        <position position="328"/>
    </location>
</feature>
<feature type="active site" description="Proton donor" evidence="2">
    <location>
        <position position="357"/>
    </location>
</feature>
<feature type="binding site" evidence="3">
    <location>
        <position position="147"/>
    </location>
    <ligand>
        <name>Ca(2+)</name>
        <dbReference type="ChEBI" id="CHEBI:29108"/>
    </ligand>
</feature>
<feature type="binding site" evidence="3">
    <location>
        <position position="152"/>
    </location>
    <ligand>
        <name>Ca(2+)</name>
        <dbReference type="ChEBI" id="CHEBI:29108"/>
    </ligand>
</feature>
<feature type="binding site" evidence="3">
    <location>
        <position position="153"/>
    </location>
    <ligand>
        <name>Ca(2+)</name>
        <dbReference type="ChEBI" id="CHEBI:29108"/>
    </ligand>
</feature>
<feature type="binding site" evidence="3">
    <location>
        <position position="172"/>
    </location>
    <ligand>
        <name>Ca(2+)</name>
        <dbReference type="ChEBI" id="CHEBI:29108"/>
    </ligand>
</feature>
<feature type="binding site" evidence="3">
    <location>
        <position position="174"/>
    </location>
    <ligand>
        <name>Ca(2+)</name>
        <dbReference type="ChEBI" id="CHEBI:29108"/>
    </ligand>
</feature>
<feature type="binding site" evidence="2">
    <location>
        <position position="247"/>
    </location>
    <ligand>
        <name>substrate</name>
    </ligand>
</feature>
<feature type="binding site" evidence="2">
    <location>
        <position position="326"/>
    </location>
    <ligand>
        <name>substrate</name>
    </ligand>
</feature>
<feature type="binding site" evidence="2">
    <location>
        <begin position="423"/>
        <end position="424"/>
    </location>
    <ligand>
        <name>substrate</name>
    </ligand>
</feature>
<feature type="binding site" evidence="2">
    <location>
        <position position="468"/>
    </location>
    <ligand>
        <name>substrate</name>
    </ligand>
</feature>
<feature type="binding site" evidence="2">
    <location>
        <position position="472"/>
    </location>
    <ligand>
        <name>substrate</name>
    </ligand>
</feature>
<feature type="site" description="Transition state stabilizer" evidence="1">
    <location>
        <position position="424"/>
    </location>
</feature>
<sequence length="586" mass="68520">MFREAIYHRPKDNYAYACANGELHIRIRTKKDDMKEVTLVYGDTYEFDDNKWTYSTAHMKKTGSDQLFDYWLASVTPRYKRLRYGFIVNDRKDSTCFTEKGFYPEPPVNDISYYFSFPYVNQADIFQAPEWVKDTVWYQIFPERFANGNKDNDPDGTLPWGSREPEIDNFFGGDLEGVIEHIDYLKELGIGGIYFTPIFKAHSNHKYDTIDYMEIDPQFGTKETLKKLIDVCHKNGIKVMLDAVFNHSGVFFPPFQDVVEKGKNSKYQDWFHIREFPLVMEPRPNYDTFGFTSSMPKFKTENPEVKEYLLEVGRYWVREFDIDGWRLDVANEVSHAFWREFRREVKAIKPDLYILGEIWHDSLPWLRGDQFDAVMNYPLSTNIVNLFANQSVSVKEFVENMSHVIHMYPDTVNEAAFNLVGSHDTPRILTQCGEDVERLKQVFVLLLTFIGTPCIYYGDEIGLTGGQDPGCRKCMEWNPDQQNRELLQHVRKLIQLRSENPLLANEGELTFVPPKNEEDPCLAYTKSNEEKTIMIIINKSKNSVEYPLSFDAAEQTVKNLWNQEQLILQNGQTLELKANDFKILEF</sequence>